<keyword id="KW-0067">ATP-binding</keyword>
<keyword id="KW-0963">Cytoplasm</keyword>
<keyword id="KW-0418">Kinase</keyword>
<keyword id="KW-0547">Nucleotide-binding</keyword>
<keyword id="KW-0665">Pyrimidine biosynthesis</keyword>
<keyword id="KW-0808">Transferase</keyword>
<feature type="chain" id="PRO_0000323821" description="Uridylate kinase">
    <location>
        <begin position="1"/>
        <end position="245"/>
    </location>
</feature>
<feature type="binding site" evidence="1">
    <location>
        <begin position="12"/>
        <end position="15"/>
    </location>
    <ligand>
        <name>ATP</name>
        <dbReference type="ChEBI" id="CHEBI:30616"/>
    </ligand>
</feature>
<feature type="binding site" evidence="1">
    <location>
        <position position="55"/>
    </location>
    <ligand>
        <name>UMP</name>
        <dbReference type="ChEBI" id="CHEBI:57865"/>
    </ligand>
</feature>
<feature type="binding site" evidence="1">
    <location>
        <position position="56"/>
    </location>
    <ligand>
        <name>ATP</name>
        <dbReference type="ChEBI" id="CHEBI:30616"/>
    </ligand>
</feature>
<feature type="binding site" evidence="1">
    <location>
        <position position="60"/>
    </location>
    <ligand>
        <name>ATP</name>
        <dbReference type="ChEBI" id="CHEBI:30616"/>
    </ligand>
</feature>
<feature type="binding site" evidence="1">
    <location>
        <position position="76"/>
    </location>
    <ligand>
        <name>UMP</name>
        <dbReference type="ChEBI" id="CHEBI:57865"/>
    </ligand>
</feature>
<feature type="binding site" evidence="1">
    <location>
        <begin position="137"/>
        <end position="144"/>
    </location>
    <ligand>
        <name>UMP</name>
        <dbReference type="ChEBI" id="CHEBI:57865"/>
    </ligand>
</feature>
<feature type="binding site" evidence="1">
    <location>
        <position position="164"/>
    </location>
    <ligand>
        <name>ATP</name>
        <dbReference type="ChEBI" id="CHEBI:30616"/>
    </ligand>
</feature>
<feature type="binding site" evidence="1">
    <location>
        <position position="171"/>
    </location>
    <ligand>
        <name>ATP</name>
        <dbReference type="ChEBI" id="CHEBI:30616"/>
    </ligand>
</feature>
<feature type="binding site" evidence="1">
    <location>
        <position position="174"/>
    </location>
    <ligand>
        <name>ATP</name>
        <dbReference type="ChEBI" id="CHEBI:30616"/>
    </ligand>
</feature>
<sequence length="245" mass="26205">MMKKRVKRVLFKISGEALSDGDSSNRISEERLSRLIAELKVVRNADVEVALVIGGGNILRGLSQSQSLQINRVSADQMGMLATLINGMALADALNTEDVPNLLTSTLSCPQLAELYNPQKASDALSQGKVVICTMGAGAPYLTTDTGAALRACELKVDILLKATMHVDGVYDQDPRECADAVRYDHISYRDFLSQGLGAIDPAAISLCMEAGIPIKMFSFARHSLEEAVFNTVGTVISSAEGGQL</sequence>
<name>PYRH_CHLTA</name>
<protein>
    <recommendedName>
        <fullName evidence="1">Uridylate kinase</fullName>
        <shortName evidence="1">UK</shortName>
        <ecNumber evidence="1">2.7.4.22</ecNumber>
    </recommendedName>
    <alternativeName>
        <fullName evidence="1">Uridine monophosphate kinase</fullName>
        <shortName evidence="1">UMP kinase</shortName>
        <shortName evidence="1">UMPK</shortName>
    </alternativeName>
</protein>
<gene>
    <name evidence="1" type="primary">pyrH</name>
    <name type="ordered locus">CTA_0738</name>
</gene>
<proteinExistence type="inferred from homology"/>
<dbReference type="EC" id="2.7.4.22" evidence="1"/>
<dbReference type="EMBL" id="CP000051">
    <property type="protein sequence ID" value="AAX50956.1"/>
    <property type="molecule type" value="Genomic_DNA"/>
</dbReference>
<dbReference type="SMR" id="Q3KL16"/>
<dbReference type="KEGG" id="cta:CTA_0738"/>
<dbReference type="HOGENOM" id="CLU_033861_0_1_0"/>
<dbReference type="UniPathway" id="UPA00159">
    <property type="reaction ID" value="UER00275"/>
</dbReference>
<dbReference type="Proteomes" id="UP000002532">
    <property type="component" value="Chromosome"/>
</dbReference>
<dbReference type="GO" id="GO:0005737">
    <property type="term" value="C:cytoplasm"/>
    <property type="evidence" value="ECO:0007669"/>
    <property type="project" value="UniProtKB-SubCell"/>
</dbReference>
<dbReference type="GO" id="GO:0005524">
    <property type="term" value="F:ATP binding"/>
    <property type="evidence" value="ECO:0007669"/>
    <property type="project" value="UniProtKB-KW"/>
</dbReference>
<dbReference type="GO" id="GO:0033862">
    <property type="term" value="F:UMP kinase activity"/>
    <property type="evidence" value="ECO:0007669"/>
    <property type="project" value="UniProtKB-EC"/>
</dbReference>
<dbReference type="GO" id="GO:0044210">
    <property type="term" value="P:'de novo' CTP biosynthetic process"/>
    <property type="evidence" value="ECO:0007669"/>
    <property type="project" value="UniProtKB-UniRule"/>
</dbReference>
<dbReference type="GO" id="GO:0006225">
    <property type="term" value="P:UDP biosynthetic process"/>
    <property type="evidence" value="ECO:0007669"/>
    <property type="project" value="TreeGrafter"/>
</dbReference>
<dbReference type="CDD" id="cd04254">
    <property type="entry name" value="AAK_UMPK-PyrH-Ec"/>
    <property type="match status" value="1"/>
</dbReference>
<dbReference type="FunFam" id="3.40.1160.10:FF:000001">
    <property type="entry name" value="Uridylate kinase"/>
    <property type="match status" value="1"/>
</dbReference>
<dbReference type="Gene3D" id="3.40.1160.10">
    <property type="entry name" value="Acetylglutamate kinase-like"/>
    <property type="match status" value="1"/>
</dbReference>
<dbReference type="HAMAP" id="MF_01220_B">
    <property type="entry name" value="PyrH_B"/>
    <property type="match status" value="1"/>
</dbReference>
<dbReference type="InterPro" id="IPR036393">
    <property type="entry name" value="AceGlu_kinase-like_sf"/>
</dbReference>
<dbReference type="InterPro" id="IPR001048">
    <property type="entry name" value="Asp/Glu/Uridylate_kinase"/>
</dbReference>
<dbReference type="InterPro" id="IPR011817">
    <property type="entry name" value="Uridylate_kinase"/>
</dbReference>
<dbReference type="InterPro" id="IPR015963">
    <property type="entry name" value="Uridylate_kinase_bac"/>
</dbReference>
<dbReference type="NCBIfam" id="TIGR02075">
    <property type="entry name" value="pyrH_bact"/>
    <property type="match status" value="1"/>
</dbReference>
<dbReference type="PANTHER" id="PTHR42833">
    <property type="entry name" value="URIDYLATE KINASE"/>
    <property type="match status" value="1"/>
</dbReference>
<dbReference type="PANTHER" id="PTHR42833:SF4">
    <property type="entry name" value="URIDYLATE KINASE PUMPKIN, CHLOROPLASTIC"/>
    <property type="match status" value="1"/>
</dbReference>
<dbReference type="Pfam" id="PF00696">
    <property type="entry name" value="AA_kinase"/>
    <property type="match status" value="1"/>
</dbReference>
<dbReference type="PIRSF" id="PIRSF005650">
    <property type="entry name" value="Uridylate_kin"/>
    <property type="match status" value="1"/>
</dbReference>
<dbReference type="SUPFAM" id="SSF53633">
    <property type="entry name" value="Carbamate kinase-like"/>
    <property type="match status" value="1"/>
</dbReference>
<organism>
    <name type="scientific">Chlamydia trachomatis serovar A (strain ATCC VR-571B / DSM 19440 / HAR-13)</name>
    <dbReference type="NCBI Taxonomy" id="315277"/>
    <lineage>
        <taxon>Bacteria</taxon>
        <taxon>Pseudomonadati</taxon>
        <taxon>Chlamydiota</taxon>
        <taxon>Chlamydiia</taxon>
        <taxon>Chlamydiales</taxon>
        <taxon>Chlamydiaceae</taxon>
        <taxon>Chlamydia/Chlamydophila group</taxon>
        <taxon>Chlamydia</taxon>
    </lineage>
</organism>
<comment type="function">
    <text evidence="1">Catalyzes the reversible phosphorylation of UMP to UDP.</text>
</comment>
<comment type="catalytic activity">
    <reaction evidence="1">
        <text>UMP + ATP = UDP + ADP</text>
        <dbReference type="Rhea" id="RHEA:24400"/>
        <dbReference type="ChEBI" id="CHEBI:30616"/>
        <dbReference type="ChEBI" id="CHEBI:57865"/>
        <dbReference type="ChEBI" id="CHEBI:58223"/>
        <dbReference type="ChEBI" id="CHEBI:456216"/>
        <dbReference type="EC" id="2.7.4.22"/>
    </reaction>
</comment>
<comment type="activity regulation">
    <text evidence="1">Inhibited by UTP.</text>
</comment>
<comment type="pathway">
    <text evidence="1">Pyrimidine metabolism; CTP biosynthesis via de novo pathway; UDP from UMP (UMPK route): step 1/1.</text>
</comment>
<comment type="subunit">
    <text evidence="1">Homohexamer.</text>
</comment>
<comment type="subcellular location">
    <subcellularLocation>
        <location evidence="1">Cytoplasm</location>
    </subcellularLocation>
</comment>
<comment type="similarity">
    <text evidence="1">Belongs to the UMP kinase family.</text>
</comment>
<evidence type="ECO:0000255" key="1">
    <source>
        <dbReference type="HAMAP-Rule" id="MF_01220"/>
    </source>
</evidence>
<reference key="1">
    <citation type="journal article" date="2005" name="Infect. Immun.">
        <title>Comparative genomic analysis of Chlamydia trachomatis oculotropic and genitotropic strains.</title>
        <authorList>
            <person name="Carlson J.H."/>
            <person name="Porcella S.F."/>
            <person name="McClarty G."/>
            <person name="Caldwell H.D."/>
        </authorList>
    </citation>
    <scope>NUCLEOTIDE SEQUENCE [LARGE SCALE GENOMIC DNA]</scope>
    <source>
        <strain>ATCC VR-571B / DSM 19440 / HAR-13</strain>
    </source>
</reference>
<accession>Q3KL16</accession>